<feature type="chain" id="PRO_0000328424" description="Probable imidazolonepropionase">
    <location>
        <begin position="1"/>
        <end position="426"/>
    </location>
</feature>
<feature type="binding site" evidence="3">
    <location>
        <position position="158"/>
    </location>
    <ligand>
        <name>4-imidazolone-5-propanoate</name>
        <dbReference type="ChEBI" id="CHEBI:77893"/>
    </ligand>
</feature>
<feature type="binding site" evidence="4">
    <location>
        <position position="158"/>
    </location>
    <ligand>
        <name>N-formimidoyl-L-glutamate</name>
        <dbReference type="ChEBI" id="CHEBI:58928"/>
    </ligand>
</feature>
<feature type="binding site" evidence="3">
    <location>
        <position position="192"/>
    </location>
    <ligand>
        <name>4-imidazolone-5-propanoate</name>
        <dbReference type="ChEBI" id="CHEBI:77893"/>
    </ligand>
</feature>
<feature type="binding site" evidence="2">
    <location>
        <position position="260"/>
    </location>
    <ligand>
        <name>Fe(3+)</name>
        <dbReference type="ChEBI" id="CHEBI:29034"/>
    </ligand>
</feature>
<feature type="binding site" evidence="3">
    <location>
        <position position="260"/>
    </location>
    <ligand>
        <name>Zn(2+)</name>
        <dbReference type="ChEBI" id="CHEBI:29105"/>
    </ligand>
</feature>
<feature type="binding site" evidence="3">
    <location>
        <position position="263"/>
    </location>
    <ligand>
        <name>4-imidazolone-5-propanoate</name>
        <dbReference type="ChEBI" id="CHEBI:77893"/>
    </ligand>
</feature>
<feature type="binding site" evidence="2">
    <location>
        <position position="334"/>
    </location>
    <ligand>
        <name>Fe(3+)</name>
        <dbReference type="ChEBI" id="CHEBI:29034"/>
    </ligand>
</feature>
<feature type="binding site" evidence="3">
    <location>
        <position position="334"/>
    </location>
    <ligand>
        <name>Zn(2+)</name>
        <dbReference type="ChEBI" id="CHEBI:29105"/>
    </ligand>
</feature>
<feature type="binding site" evidence="4">
    <location>
        <position position="336"/>
    </location>
    <ligand>
        <name>N-formimidoyl-L-glutamate</name>
        <dbReference type="ChEBI" id="CHEBI:58928"/>
    </ligand>
</feature>
<dbReference type="EC" id="3.5.2.7"/>
<dbReference type="EMBL" id="AAFI02000005">
    <property type="protein sequence ID" value="EAL72277.1"/>
    <property type="molecule type" value="Genomic_DNA"/>
</dbReference>
<dbReference type="RefSeq" id="XP_646348.1">
    <property type="nucleotide sequence ID" value="XM_641256.1"/>
</dbReference>
<dbReference type="SMR" id="Q55CY3"/>
<dbReference type="FunCoup" id="Q55CY3">
    <property type="interactions" value="2"/>
</dbReference>
<dbReference type="STRING" id="44689.Q55CY3"/>
<dbReference type="MEROPS" id="M38.980"/>
<dbReference type="PaxDb" id="44689-DDB0266532"/>
<dbReference type="EnsemblProtists" id="EAL72277">
    <property type="protein sequence ID" value="EAL72277"/>
    <property type="gene ID" value="DDB_G0269854"/>
</dbReference>
<dbReference type="GeneID" id="8617303"/>
<dbReference type="KEGG" id="ddi:DDB_G0269854"/>
<dbReference type="dictyBase" id="DDB_G0269854">
    <property type="gene designation" value="amdhd1"/>
</dbReference>
<dbReference type="VEuPathDB" id="AmoebaDB:DDB_G0269854"/>
<dbReference type="eggNOG" id="KOG3968">
    <property type="taxonomic scope" value="Eukaryota"/>
</dbReference>
<dbReference type="HOGENOM" id="CLU_041647_2_0_1"/>
<dbReference type="InParanoid" id="Q55CY3"/>
<dbReference type="OMA" id="CAPHARW"/>
<dbReference type="PhylomeDB" id="Q55CY3"/>
<dbReference type="Reactome" id="R-DDI-70921">
    <property type="pathway name" value="Histidine catabolism"/>
</dbReference>
<dbReference type="UniPathway" id="UPA00379">
    <property type="reaction ID" value="UER00551"/>
</dbReference>
<dbReference type="PRO" id="PR:Q55CY3"/>
<dbReference type="Proteomes" id="UP000002195">
    <property type="component" value="Chromosome 1"/>
</dbReference>
<dbReference type="GO" id="GO:0005737">
    <property type="term" value="C:cytoplasm"/>
    <property type="evidence" value="ECO:0007669"/>
    <property type="project" value="InterPro"/>
</dbReference>
<dbReference type="GO" id="GO:0050480">
    <property type="term" value="F:imidazolonepropionase activity"/>
    <property type="evidence" value="ECO:0000318"/>
    <property type="project" value="GO_Central"/>
</dbReference>
<dbReference type="GO" id="GO:0046872">
    <property type="term" value="F:metal ion binding"/>
    <property type="evidence" value="ECO:0007669"/>
    <property type="project" value="UniProtKB-KW"/>
</dbReference>
<dbReference type="GO" id="GO:0006548">
    <property type="term" value="P:L-histidine catabolic process"/>
    <property type="evidence" value="ECO:0000318"/>
    <property type="project" value="GO_Central"/>
</dbReference>
<dbReference type="GO" id="GO:0019556">
    <property type="term" value="P:L-histidine catabolic process to glutamate and formamide"/>
    <property type="evidence" value="ECO:0007669"/>
    <property type="project" value="UniProtKB-UniPathway"/>
</dbReference>
<dbReference type="GO" id="GO:0019557">
    <property type="term" value="P:L-histidine catabolic process to glutamate and formate"/>
    <property type="evidence" value="ECO:0007669"/>
    <property type="project" value="UniProtKB-UniPathway"/>
</dbReference>
<dbReference type="CDD" id="cd01296">
    <property type="entry name" value="Imidazolone-5PH"/>
    <property type="match status" value="1"/>
</dbReference>
<dbReference type="FunFam" id="3.20.20.140:FF:000007">
    <property type="entry name" value="Imidazolonepropionase"/>
    <property type="match status" value="1"/>
</dbReference>
<dbReference type="Gene3D" id="3.20.20.140">
    <property type="entry name" value="Metal-dependent hydrolases"/>
    <property type="match status" value="1"/>
</dbReference>
<dbReference type="Gene3D" id="2.30.40.10">
    <property type="entry name" value="Urease, subunit C, domain 1"/>
    <property type="match status" value="1"/>
</dbReference>
<dbReference type="InterPro" id="IPR006680">
    <property type="entry name" value="Amidohydro-rel"/>
</dbReference>
<dbReference type="InterPro" id="IPR005920">
    <property type="entry name" value="HutI"/>
</dbReference>
<dbReference type="InterPro" id="IPR011059">
    <property type="entry name" value="Metal-dep_hydrolase_composite"/>
</dbReference>
<dbReference type="InterPro" id="IPR032466">
    <property type="entry name" value="Metal_Hydrolase"/>
</dbReference>
<dbReference type="NCBIfam" id="TIGR01224">
    <property type="entry name" value="hutI"/>
    <property type="match status" value="1"/>
</dbReference>
<dbReference type="PANTHER" id="PTHR42752">
    <property type="entry name" value="IMIDAZOLONEPROPIONASE"/>
    <property type="match status" value="1"/>
</dbReference>
<dbReference type="PANTHER" id="PTHR42752:SF1">
    <property type="entry name" value="IMIDAZOLONEPROPIONASE-RELATED"/>
    <property type="match status" value="1"/>
</dbReference>
<dbReference type="Pfam" id="PF01979">
    <property type="entry name" value="Amidohydro_1"/>
    <property type="match status" value="1"/>
</dbReference>
<dbReference type="SUPFAM" id="SSF51338">
    <property type="entry name" value="Composite domain of metallo-dependent hydrolases"/>
    <property type="match status" value="2"/>
</dbReference>
<dbReference type="SUPFAM" id="SSF51556">
    <property type="entry name" value="Metallo-dependent hydrolases"/>
    <property type="match status" value="1"/>
</dbReference>
<name>HUTI_DICDI</name>
<protein>
    <recommendedName>
        <fullName>Probable imidazolonepropionase</fullName>
        <ecNumber>3.5.2.7</ecNumber>
    </recommendedName>
    <alternativeName>
        <fullName>Amidohydrolase domain-containing protein 1 homolog</fullName>
    </alternativeName>
</protein>
<gene>
    <name type="primary">amdhd1</name>
    <name type="ORF">DDB_G0269854</name>
</gene>
<proteinExistence type="inferred from homology"/>
<keyword id="KW-0369">Histidine metabolism</keyword>
<keyword id="KW-0378">Hydrolase</keyword>
<keyword id="KW-0408">Iron</keyword>
<keyword id="KW-0479">Metal-binding</keyword>
<keyword id="KW-1185">Reference proteome</keyword>
<keyword id="KW-0862">Zinc</keyword>
<organism>
    <name type="scientific">Dictyostelium discoideum</name>
    <name type="common">Social amoeba</name>
    <dbReference type="NCBI Taxonomy" id="44689"/>
    <lineage>
        <taxon>Eukaryota</taxon>
        <taxon>Amoebozoa</taxon>
        <taxon>Evosea</taxon>
        <taxon>Eumycetozoa</taxon>
        <taxon>Dictyostelia</taxon>
        <taxon>Dictyosteliales</taxon>
        <taxon>Dictyosteliaceae</taxon>
        <taxon>Dictyostelium</taxon>
    </lineage>
</organism>
<accession>Q55CY3</accession>
<reference key="1">
    <citation type="journal article" date="2005" name="Nature">
        <title>The genome of the social amoeba Dictyostelium discoideum.</title>
        <authorList>
            <person name="Eichinger L."/>
            <person name="Pachebat J.A."/>
            <person name="Gloeckner G."/>
            <person name="Rajandream M.A."/>
            <person name="Sucgang R."/>
            <person name="Berriman M."/>
            <person name="Song J."/>
            <person name="Olsen R."/>
            <person name="Szafranski K."/>
            <person name="Xu Q."/>
            <person name="Tunggal B."/>
            <person name="Kummerfeld S."/>
            <person name="Madera M."/>
            <person name="Konfortov B.A."/>
            <person name="Rivero F."/>
            <person name="Bankier A.T."/>
            <person name="Lehmann R."/>
            <person name="Hamlin N."/>
            <person name="Davies R."/>
            <person name="Gaudet P."/>
            <person name="Fey P."/>
            <person name="Pilcher K."/>
            <person name="Chen G."/>
            <person name="Saunders D."/>
            <person name="Sodergren E.J."/>
            <person name="Davis P."/>
            <person name="Kerhornou A."/>
            <person name="Nie X."/>
            <person name="Hall N."/>
            <person name="Anjard C."/>
            <person name="Hemphill L."/>
            <person name="Bason N."/>
            <person name="Farbrother P."/>
            <person name="Desany B."/>
            <person name="Just E."/>
            <person name="Morio T."/>
            <person name="Rost R."/>
            <person name="Churcher C.M."/>
            <person name="Cooper J."/>
            <person name="Haydock S."/>
            <person name="van Driessche N."/>
            <person name="Cronin A."/>
            <person name="Goodhead I."/>
            <person name="Muzny D.M."/>
            <person name="Mourier T."/>
            <person name="Pain A."/>
            <person name="Lu M."/>
            <person name="Harper D."/>
            <person name="Lindsay R."/>
            <person name="Hauser H."/>
            <person name="James K.D."/>
            <person name="Quiles M."/>
            <person name="Madan Babu M."/>
            <person name="Saito T."/>
            <person name="Buchrieser C."/>
            <person name="Wardroper A."/>
            <person name="Felder M."/>
            <person name="Thangavelu M."/>
            <person name="Johnson D."/>
            <person name="Knights A."/>
            <person name="Loulseged H."/>
            <person name="Mungall K.L."/>
            <person name="Oliver K."/>
            <person name="Price C."/>
            <person name="Quail M.A."/>
            <person name="Urushihara H."/>
            <person name="Hernandez J."/>
            <person name="Rabbinowitsch E."/>
            <person name="Steffen D."/>
            <person name="Sanders M."/>
            <person name="Ma J."/>
            <person name="Kohara Y."/>
            <person name="Sharp S."/>
            <person name="Simmonds M.N."/>
            <person name="Spiegler S."/>
            <person name="Tivey A."/>
            <person name="Sugano S."/>
            <person name="White B."/>
            <person name="Walker D."/>
            <person name="Woodward J.R."/>
            <person name="Winckler T."/>
            <person name="Tanaka Y."/>
            <person name="Shaulsky G."/>
            <person name="Schleicher M."/>
            <person name="Weinstock G.M."/>
            <person name="Rosenthal A."/>
            <person name="Cox E.C."/>
            <person name="Chisholm R.L."/>
            <person name="Gibbs R.A."/>
            <person name="Loomis W.F."/>
            <person name="Platzer M."/>
            <person name="Kay R.R."/>
            <person name="Williams J.G."/>
            <person name="Dear P.H."/>
            <person name="Noegel A.A."/>
            <person name="Barrell B.G."/>
            <person name="Kuspa A."/>
        </authorList>
    </citation>
    <scope>NUCLEOTIDE SEQUENCE [LARGE SCALE GENOMIC DNA]</scope>
    <source>
        <strain>AX4</strain>
    </source>
</reference>
<evidence type="ECO:0000250" key="1"/>
<evidence type="ECO:0000250" key="2">
    <source>
        <dbReference type="UniProtKB" id="A0KF84"/>
    </source>
</evidence>
<evidence type="ECO:0000250" key="3">
    <source>
        <dbReference type="UniProtKB" id="P42084"/>
    </source>
</evidence>
<evidence type="ECO:0000250" key="4">
    <source>
        <dbReference type="UniProtKB" id="Q8U8Z6"/>
    </source>
</evidence>
<evidence type="ECO:0000305" key="5"/>
<sequence length="426" mass="46887">MGFDFKLKISNASQLVVISKGKPFLIGKEMSNIEIIENGTMIIDENGIIFDIGTFKEMEEKYKDKSFEKVLDCTGKSVLPGFVDGHTHPVFSGDRVHEFAMKLAGATYLDVHKAGGGIQFTISHTKNSTEDELYQLLIPRLNRMLKNGTTLIEAKSGYGLETETEMKMLKVLDRASKQFQGVEIVSTYLGGHAIPKGMNASEATDDIINKQIPELKRLKDAGEISPANIDVFLEKGFFEYEDTKRILQAGKDIGLECNFHGDELSYMKSGELAGELGCRAISHLEKVSEDGMKAMAATPTFAVLLPTTAYILRLECPPARRMIELGVPVALGSDFNPNAHCLSMPFVMNLACVLMKMNMNESLVAATLNAAASINKSSTHGSLEVGKFADFVILSADKWEHIIYEMVDPPISHVFKKGNLVFSNNN</sequence>
<comment type="catalytic activity">
    <reaction>
        <text>4-imidazolone-5-propanoate + H2O = N-formimidoyl-L-glutamate</text>
        <dbReference type="Rhea" id="RHEA:23660"/>
        <dbReference type="ChEBI" id="CHEBI:15377"/>
        <dbReference type="ChEBI" id="CHEBI:58928"/>
        <dbReference type="ChEBI" id="CHEBI:77893"/>
        <dbReference type="EC" id="3.5.2.7"/>
    </reaction>
</comment>
<comment type="cofactor">
    <cofactor evidence="1">
        <name>Zn(2+)</name>
        <dbReference type="ChEBI" id="CHEBI:29105"/>
    </cofactor>
    <cofactor evidence="1">
        <name>Fe(3+)</name>
        <dbReference type="ChEBI" id="CHEBI:29034"/>
    </cofactor>
    <text evidence="1">Binds 1 zinc or iron ion per subunit.</text>
</comment>
<comment type="pathway">
    <text>Amino-acid degradation; L-histidine degradation into L-glutamate; N-formimidoyl-L-glutamate from L-histidine: step 3/3.</text>
</comment>
<comment type="similarity">
    <text evidence="5">Belongs to the metallo-dependent hydrolases superfamily. HutI family.</text>
</comment>